<protein>
    <recommendedName>
        <fullName>Mitochondrial import inner membrane translocase subunit TIM9</fullName>
    </recommendedName>
</protein>
<proteinExistence type="inferred from homology"/>
<gene>
    <name type="primary">TIM9</name>
    <name type="ordered locus">KLLA0E22924g</name>
</gene>
<evidence type="ECO:0000250" key="1"/>
<evidence type="ECO:0000305" key="2"/>
<feature type="chain" id="PRO_0000228047" description="Mitochondrial import inner membrane translocase subunit TIM9">
    <location>
        <begin position="1"/>
        <end position="87"/>
    </location>
</feature>
<feature type="short sequence motif" description="Twin CX3C motif">
    <location>
        <begin position="35"/>
        <end position="59"/>
    </location>
</feature>
<feature type="disulfide bond" evidence="1">
    <location>
        <begin position="35"/>
        <end position="59"/>
    </location>
</feature>
<feature type="disulfide bond" evidence="1">
    <location>
        <begin position="39"/>
        <end position="55"/>
    </location>
</feature>
<keyword id="KW-0143">Chaperone</keyword>
<keyword id="KW-1015">Disulfide bond</keyword>
<keyword id="KW-0472">Membrane</keyword>
<keyword id="KW-0479">Metal-binding</keyword>
<keyword id="KW-0496">Mitochondrion</keyword>
<keyword id="KW-0999">Mitochondrion inner membrane</keyword>
<keyword id="KW-0653">Protein transport</keyword>
<keyword id="KW-1185">Reference proteome</keyword>
<keyword id="KW-0811">Translocation</keyword>
<keyword id="KW-0813">Transport</keyword>
<keyword id="KW-0862">Zinc</keyword>
<organism>
    <name type="scientific">Kluyveromyces lactis (strain ATCC 8585 / CBS 2359 / DSM 70799 / NBRC 1267 / NRRL Y-1140 / WM37)</name>
    <name type="common">Yeast</name>
    <name type="synonym">Candida sphaerica</name>
    <dbReference type="NCBI Taxonomy" id="284590"/>
    <lineage>
        <taxon>Eukaryota</taxon>
        <taxon>Fungi</taxon>
        <taxon>Dikarya</taxon>
        <taxon>Ascomycota</taxon>
        <taxon>Saccharomycotina</taxon>
        <taxon>Saccharomycetes</taxon>
        <taxon>Saccharomycetales</taxon>
        <taxon>Saccharomycetaceae</taxon>
        <taxon>Kluyveromyces</taxon>
    </lineage>
</organism>
<name>TIM9_KLULA</name>
<comment type="function">
    <text evidence="1">Mitochondrial intermembrane chaperone that participates in the import and insertion of multi-pass transmembrane proteins into the mitochondrial inner membrane. Also required for the transfer of beta-barrel precursors from the TOM complex to the sorting and assembly machinery (SAM complex) of the outer membrane. Acts as a chaperone-like protein that protects the hydrophobic precursors from aggregation and guide them through the mitochondrial intermembrane space (By similarity).</text>
</comment>
<comment type="subunit">
    <text evidence="1">Heterohexamer; composed of 3 copies of TIM9 and 3 copies of TIM10, named soluble 70 kDa complex. Associates with the TIM22 complex, whose core is composed of TIM22 and TIM54. Interacts with the transmembrane regions of multi-pass transmembrane proteins in transit (By similarity).</text>
</comment>
<comment type="subcellular location">
    <subcellularLocation>
        <location evidence="1">Mitochondrion inner membrane</location>
        <topology evidence="1">Peripheral membrane protein</topology>
        <orientation evidence="1">Intermembrane side</orientation>
    </subcellularLocation>
</comment>
<comment type="domain">
    <text evidence="1">The twin CX3C motif contains 4 conserved Cys residues that form 2 disulfide bonds in the mitochondrial intermembrane space. However, during the transit of TIM9 from cytoplasm into mitochondrion, the Cys residues probably coordinate zinc, thereby preventing folding and allowing its transfer across mitochondrial outer membrane (By similarity).</text>
</comment>
<comment type="similarity">
    <text evidence="2">Belongs to the small Tim family.</text>
</comment>
<sequence length="87" mass="10350">MDQLNGKEQQEFQKIVEQKQMKDFMRLYSNLVERCFSDCVNDFTSAKLTSKEQNCIMRCSEKFLKHSERVGQRFQEQNAAMNQTMGR</sequence>
<reference key="1">
    <citation type="journal article" date="2004" name="Nature">
        <title>Genome evolution in yeasts.</title>
        <authorList>
            <person name="Dujon B."/>
            <person name="Sherman D."/>
            <person name="Fischer G."/>
            <person name="Durrens P."/>
            <person name="Casaregola S."/>
            <person name="Lafontaine I."/>
            <person name="de Montigny J."/>
            <person name="Marck C."/>
            <person name="Neuveglise C."/>
            <person name="Talla E."/>
            <person name="Goffard N."/>
            <person name="Frangeul L."/>
            <person name="Aigle M."/>
            <person name="Anthouard V."/>
            <person name="Babour A."/>
            <person name="Barbe V."/>
            <person name="Barnay S."/>
            <person name="Blanchin S."/>
            <person name="Beckerich J.-M."/>
            <person name="Beyne E."/>
            <person name="Bleykasten C."/>
            <person name="Boisrame A."/>
            <person name="Boyer J."/>
            <person name="Cattolico L."/>
            <person name="Confanioleri F."/>
            <person name="de Daruvar A."/>
            <person name="Despons L."/>
            <person name="Fabre E."/>
            <person name="Fairhead C."/>
            <person name="Ferry-Dumazet H."/>
            <person name="Groppi A."/>
            <person name="Hantraye F."/>
            <person name="Hennequin C."/>
            <person name="Jauniaux N."/>
            <person name="Joyet P."/>
            <person name="Kachouri R."/>
            <person name="Kerrest A."/>
            <person name="Koszul R."/>
            <person name="Lemaire M."/>
            <person name="Lesur I."/>
            <person name="Ma L."/>
            <person name="Muller H."/>
            <person name="Nicaud J.-M."/>
            <person name="Nikolski M."/>
            <person name="Oztas S."/>
            <person name="Ozier-Kalogeropoulos O."/>
            <person name="Pellenz S."/>
            <person name="Potier S."/>
            <person name="Richard G.-F."/>
            <person name="Straub M.-L."/>
            <person name="Suleau A."/>
            <person name="Swennen D."/>
            <person name="Tekaia F."/>
            <person name="Wesolowski-Louvel M."/>
            <person name="Westhof E."/>
            <person name="Wirth B."/>
            <person name="Zeniou-Meyer M."/>
            <person name="Zivanovic Y."/>
            <person name="Bolotin-Fukuhara M."/>
            <person name="Thierry A."/>
            <person name="Bouchier C."/>
            <person name="Caudron B."/>
            <person name="Scarpelli C."/>
            <person name="Gaillardin C."/>
            <person name="Weissenbach J."/>
            <person name="Wincker P."/>
            <person name="Souciet J.-L."/>
        </authorList>
    </citation>
    <scope>NUCLEOTIDE SEQUENCE [LARGE SCALE GENOMIC DNA]</scope>
    <source>
        <strain>ATCC 8585 / CBS 2359 / DSM 70799 / NBRC 1267 / NRRL Y-1140 / WM37</strain>
    </source>
</reference>
<accession>Q6CM57</accession>
<dbReference type="EMBL" id="CR382125">
    <property type="protein sequence ID" value="CAH00069.1"/>
    <property type="molecule type" value="Genomic_DNA"/>
</dbReference>
<dbReference type="RefSeq" id="XP_454982.1">
    <property type="nucleotide sequence ID" value="XM_454982.1"/>
</dbReference>
<dbReference type="SMR" id="Q6CM57"/>
<dbReference type="FunCoup" id="Q6CM57">
    <property type="interactions" value="947"/>
</dbReference>
<dbReference type="STRING" id="284590.Q6CM57"/>
<dbReference type="PaxDb" id="284590-Q6CM57"/>
<dbReference type="KEGG" id="kla:KLLA0_E22793g"/>
<dbReference type="eggNOG" id="KOG3479">
    <property type="taxonomic scope" value="Eukaryota"/>
</dbReference>
<dbReference type="HOGENOM" id="CLU_141397_3_0_1"/>
<dbReference type="InParanoid" id="Q6CM57"/>
<dbReference type="OMA" id="QDFLRMY"/>
<dbReference type="Proteomes" id="UP000000598">
    <property type="component" value="Chromosome E"/>
</dbReference>
<dbReference type="GO" id="GO:0005743">
    <property type="term" value="C:mitochondrial inner membrane"/>
    <property type="evidence" value="ECO:0007669"/>
    <property type="project" value="UniProtKB-SubCell"/>
</dbReference>
<dbReference type="GO" id="GO:0046872">
    <property type="term" value="F:metal ion binding"/>
    <property type="evidence" value="ECO:0007669"/>
    <property type="project" value="UniProtKB-KW"/>
</dbReference>
<dbReference type="GO" id="GO:0015031">
    <property type="term" value="P:protein transport"/>
    <property type="evidence" value="ECO:0007669"/>
    <property type="project" value="UniProtKB-KW"/>
</dbReference>
<dbReference type="FunFam" id="1.10.287.810:FF:000008">
    <property type="entry name" value="Mitochondrial import inner membrane translocase subunit TIM9"/>
    <property type="match status" value="1"/>
</dbReference>
<dbReference type="Gene3D" id="1.10.287.810">
    <property type="entry name" value="Mitochondrial import inner membrane translocase subunit tim13 like domains"/>
    <property type="match status" value="1"/>
</dbReference>
<dbReference type="InterPro" id="IPR050673">
    <property type="entry name" value="Mito_inner_translocase_sub"/>
</dbReference>
<dbReference type="InterPro" id="IPR004217">
    <property type="entry name" value="Tim10-like"/>
</dbReference>
<dbReference type="InterPro" id="IPR035427">
    <property type="entry name" value="Tim10-like_dom_sf"/>
</dbReference>
<dbReference type="PANTHER" id="PTHR13172">
    <property type="entry name" value="MITOCHONDRIAL IMPORT INNER MEMBRANE TRANSLOCASE SUBUNIT TIM9B"/>
    <property type="match status" value="1"/>
</dbReference>
<dbReference type="Pfam" id="PF02953">
    <property type="entry name" value="zf-Tim10_DDP"/>
    <property type="match status" value="1"/>
</dbReference>
<dbReference type="SUPFAM" id="SSF144122">
    <property type="entry name" value="Tim10-like"/>
    <property type="match status" value="1"/>
</dbReference>